<proteinExistence type="evidence at protein level"/>
<accession>B2KZE7</accession>
<protein>
    <recommendedName>
        <fullName evidence="5">Cysteinylglycine-S-conjugate dipeptidase</fullName>
        <ecNumber evidence="2">3.4.13.23</ecNumber>
    </recommendedName>
    <alternativeName>
        <fullName evidence="3">Thiol precursor dipeptidase</fullName>
    </alternativeName>
</protein>
<feature type="chain" id="PRO_0000451211" description="Cysteinylglycine-S-conjugate dipeptidase">
    <location>
        <begin position="1"/>
        <end position="455"/>
    </location>
</feature>
<feature type="active site" evidence="1">
    <location>
        <position position="94"/>
    </location>
</feature>
<feature type="active site" description="Proton acceptor" evidence="1">
    <location>
        <position position="158"/>
    </location>
</feature>
<feature type="binding site" evidence="1">
    <location>
        <position position="92"/>
    </location>
    <ligand>
        <name>Zn(2+)</name>
        <dbReference type="ChEBI" id="CHEBI:29105"/>
        <label>1</label>
    </ligand>
</feature>
<feature type="binding site" evidence="1">
    <location>
        <position position="125"/>
    </location>
    <ligand>
        <name>Zn(2+)</name>
        <dbReference type="ChEBI" id="CHEBI:29105"/>
        <label>1</label>
    </ligand>
</feature>
<feature type="binding site" evidence="1">
    <location>
        <position position="125"/>
    </location>
    <ligand>
        <name>Zn(2+)</name>
        <dbReference type="ChEBI" id="CHEBI:29105"/>
        <label>2</label>
    </ligand>
</feature>
<feature type="binding site" evidence="1">
    <location>
        <position position="159"/>
    </location>
    <ligand>
        <name>Zn(2+)</name>
        <dbReference type="ChEBI" id="CHEBI:29105"/>
        <label>2</label>
    </ligand>
</feature>
<feature type="binding site" evidence="1">
    <location>
        <position position="163"/>
    </location>
    <ligand>
        <name>Zn(2+)</name>
        <dbReference type="ChEBI" id="CHEBI:29105"/>
        <label>2</label>
    </ligand>
</feature>
<feature type="binding site" evidence="1">
    <location>
        <position position="428"/>
    </location>
    <ligand>
        <name>Zn(2+)</name>
        <dbReference type="ChEBI" id="CHEBI:29105"/>
        <label>2</label>
    </ligand>
</feature>
<sequence>MSNDKAATSTNFNLTPNRERIFQELSELISHYSPHSMPEHADTHEEAAKWVTAKLEELGLDVTRHPTVDDADTIIGVKEPVGDAPTILLYSHYDVVPAQNPAVWTNDPLELDERDGRWYGRGAADCKGNVIMHLEALRMVQENGGTDLGLKVVMEGSEELGGEDGLGKLIDANPELFTADVIFIGDGGNVAVGIPTLTTHLRGGAQLRFKVDTLEGPVHSGGWGGAAPDAAHALIRIIDSFFDEHGRTTIEGVDTTAKWEGDPYDRETFRKDARVLDGVQLLGTVDDEPADMVWARPAITVIGFTSVPVEDATNIVNPTAEAQFNLRVPAPQSAAEVAKKVEEQIRARAPWGAKVEVSITGVNEPFSTDPNGPAVQHFGKCLQDAYGAEHLTVVGTGGSIPLTVTLQKHFPDAEFALYGVADPAANIHGVDESVDPTEIEHVAIAEAEFLLTYGK</sequence>
<organism>
    <name type="scientific">Corynebacterium striatum</name>
    <dbReference type="NCBI Taxonomy" id="43770"/>
    <lineage>
        <taxon>Bacteria</taxon>
        <taxon>Bacillati</taxon>
        <taxon>Actinomycetota</taxon>
        <taxon>Actinomycetes</taxon>
        <taxon>Mycobacteriales</taxon>
        <taxon>Corynebacteriaceae</taxon>
        <taxon>Corynebacterium</taxon>
    </lineage>
</organism>
<name>TPDA_CORST</name>
<reference key="1">
    <citation type="journal article" date="2008" name="J. Biol. Chem.">
        <title>The sequential action of a dipeptidase and a beta-lyase is required for the release of the human body odorant 3-methyl-3-sulfanylhexan-1-ol from a secreted Cys-Gly-(S) conjugate by Corynebacteria.</title>
        <authorList>
            <person name="Emter R."/>
            <person name="Natsch A."/>
        </authorList>
    </citation>
    <scope>NUCLEOTIDE SEQUENCE [GENOMIC DNA]</scope>
    <scope>IDENTIFICATION BY MASS SPECTROMETRY</scope>
    <scope>FUNCTION</scope>
    <scope>CATALYTIC ACTIVITY</scope>
    <scope>BIOPHYSICOCHEMICAL PROPERTIES</scope>
    <source>
        <strain>Ax20</strain>
    </source>
</reference>
<dbReference type="EC" id="3.4.13.23" evidence="2"/>
<dbReference type="EMBL" id="EU311559">
    <property type="protein sequence ID" value="ACA03770.1"/>
    <property type="molecule type" value="Genomic_DNA"/>
</dbReference>
<dbReference type="SMR" id="B2KZE7"/>
<dbReference type="KEGG" id="ag:ACA03770"/>
<dbReference type="BioCyc" id="MetaCyc:MONOMER-20503"/>
<dbReference type="BRENDA" id="3.4.13.23">
    <property type="organism ID" value="7918"/>
</dbReference>
<dbReference type="GO" id="GO:0004177">
    <property type="term" value="F:aminopeptidase activity"/>
    <property type="evidence" value="ECO:0007669"/>
    <property type="project" value="UniProtKB-KW"/>
</dbReference>
<dbReference type="GO" id="GO:0016805">
    <property type="term" value="F:dipeptidase activity"/>
    <property type="evidence" value="ECO:0007669"/>
    <property type="project" value="UniProtKB-KW"/>
</dbReference>
<dbReference type="GO" id="GO:0046872">
    <property type="term" value="F:metal ion binding"/>
    <property type="evidence" value="ECO:0007669"/>
    <property type="project" value="UniProtKB-KW"/>
</dbReference>
<dbReference type="GO" id="GO:0006508">
    <property type="term" value="P:proteolysis"/>
    <property type="evidence" value="ECO:0007669"/>
    <property type="project" value="UniProtKB-KW"/>
</dbReference>
<dbReference type="Gene3D" id="3.30.70.360">
    <property type="match status" value="1"/>
</dbReference>
<dbReference type="Gene3D" id="3.40.630.10">
    <property type="entry name" value="Zn peptidases"/>
    <property type="match status" value="1"/>
</dbReference>
<dbReference type="InterPro" id="IPR001261">
    <property type="entry name" value="ArgE/DapE_CS"/>
</dbReference>
<dbReference type="InterPro" id="IPR036264">
    <property type="entry name" value="Bact_exopeptidase_dim_dom"/>
</dbReference>
<dbReference type="InterPro" id="IPR051458">
    <property type="entry name" value="Cyt/Met_Dipeptidase"/>
</dbReference>
<dbReference type="InterPro" id="IPR002933">
    <property type="entry name" value="Peptidase_M20"/>
</dbReference>
<dbReference type="InterPro" id="IPR011650">
    <property type="entry name" value="Peptidase_M20_dimer"/>
</dbReference>
<dbReference type="NCBIfam" id="NF005914">
    <property type="entry name" value="PRK07907.1"/>
    <property type="match status" value="1"/>
</dbReference>
<dbReference type="PANTHER" id="PTHR43270">
    <property type="entry name" value="BETA-ALA-HIS DIPEPTIDASE"/>
    <property type="match status" value="1"/>
</dbReference>
<dbReference type="PANTHER" id="PTHR43270:SF12">
    <property type="entry name" value="SUCCINYL-DIAMINOPIMELATE DESUCCINYLASE"/>
    <property type="match status" value="1"/>
</dbReference>
<dbReference type="Pfam" id="PF07687">
    <property type="entry name" value="M20_dimer"/>
    <property type="match status" value="1"/>
</dbReference>
<dbReference type="Pfam" id="PF01546">
    <property type="entry name" value="Peptidase_M20"/>
    <property type="match status" value="1"/>
</dbReference>
<dbReference type="SUPFAM" id="SSF55031">
    <property type="entry name" value="Bacterial exopeptidase dimerisation domain"/>
    <property type="match status" value="1"/>
</dbReference>
<dbReference type="SUPFAM" id="SSF53187">
    <property type="entry name" value="Zn-dependent exopeptidases"/>
    <property type="match status" value="1"/>
</dbReference>
<dbReference type="PROSITE" id="PS00758">
    <property type="entry name" value="ARGE_DAPE_CPG2_1"/>
    <property type="match status" value="1"/>
</dbReference>
<comment type="function">
    <text evidence="2">Metallopeptidase that hydrolyzes the Cys-Gly bond of Cys-Gly-S-conjugates (PubMed:18515361). Involved in the formation of the human body odorant 3-methyl-3-sulfanylhexan-1-ol (3M3SH) from odorless axilla secretions. Catalyzes the hydrolysis of the Cys-Gly bond of the Cys-Gly-S-conjugate of 3M3SH, a key precursor secreted by apocrine glands in human axilla skin. The Cys-S-conjugate obtained is then cleaved by the Cys-S-conjugate beta-lyase MetC, which finally releases 3M3SH (PubMed:18515361).</text>
</comment>
<comment type="catalytic activity">
    <reaction evidence="2">
        <text>an S-substituted L-cysteinylglycine + H2O = an S-substituted L-cysteine + glycine</text>
        <dbReference type="Rhea" id="RHEA:60444"/>
        <dbReference type="ChEBI" id="CHEBI:15377"/>
        <dbReference type="ChEBI" id="CHEBI:57305"/>
        <dbReference type="ChEBI" id="CHEBI:58717"/>
        <dbReference type="ChEBI" id="CHEBI:143103"/>
        <dbReference type="EC" id="3.4.13.23"/>
    </reaction>
    <physiologicalReaction direction="left-to-right" evidence="3">
        <dbReference type="Rhea" id="RHEA:60445"/>
    </physiologicalReaction>
</comment>
<comment type="catalytic activity">
    <reaction evidence="2">
        <text>S-(1-hydroxy-3-methylhexan-3-yl)-L-cysteinylglycine + H2O = S-(1-hydroxy-3-methylhexan-3-yl)-L-cysteine + glycine</text>
        <dbReference type="Rhea" id="RHEA:62572"/>
        <dbReference type="ChEBI" id="CHEBI:15377"/>
        <dbReference type="ChEBI" id="CHEBI:57305"/>
        <dbReference type="ChEBI" id="CHEBI:145804"/>
        <dbReference type="ChEBI" id="CHEBI:145805"/>
    </reaction>
    <physiologicalReaction direction="left-to-right" evidence="3">
        <dbReference type="Rhea" id="RHEA:62573"/>
    </physiologicalReaction>
</comment>
<comment type="catalytic activity">
    <reaction evidence="2">
        <text>S-benzyl-L-cysteinylglycine + H2O = S-benzyl-L-cysteine + glycine</text>
        <dbReference type="Rhea" id="RHEA:62568"/>
        <dbReference type="ChEBI" id="CHEBI:15377"/>
        <dbReference type="ChEBI" id="CHEBI:57305"/>
        <dbReference type="ChEBI" id="CHEBI:145802"/>
        <dbReference type="ChEBI" id="CHEBI:145803"/>
    </reaction>
    <physiologicalReaction direction="left-to-right" evidence="3">
        <dbReference type="Rhea" id="RHEA:62569"/>
    </physiologicalReaction>
</comment>
<comment type="cofactor">
    <cofactor evidence="1">
        <name>Zn(2+)</name>
        <dbReference type="ChEBI" id="CHEBI:29105"/>
    </cofactor>
</comment>
<comment type="biophysicochemical properties">
    <kinetics>
        <KM evidence="2">0.045 mM for S-(1-hydroxy-3-methylhexan-3-yl)-L-cysteinylglycine</KM>
        <KM evidence="2">0.2 mM for S-benzyl-L-cysteinylglycine</KM>
        <Vmax evidence="2">0.023 mmol/min/mg enzyme with S-(1-hydroxy-3-methylhexan-3-yl)-L-cysteinylglycine as substrate</Vmax>
        <Vmax evidence="2">0.169 mmol/min/mg enzyme with S-benzyl-L-cysteinylglycine as substrate</Vmax>
    </kinetics>
</comment>
<comment type="similarity">
    <text evidence="4">Belongs to the peptidase M20F family.</text>
</comment>
<keyword id="KW-0031">Aminopeptidase</keyword>
<keyword id="KW-0170">Cobalt</keyword>
<keyword id="KW-0224">Dipeptidase</keyword>
<keyword id="KW-0378">Hydrolase</keyword>
<keyword id="KW-0479">Metal-binding</keyword>
<keyword id="KW-0645">Protease</keyword>
<keyword id="KW-0862">Zinc</keyword>
<gene>
    <name evidence="3" type="primary">tpdA</name>
</gene>
<evidence type="ECO:0000250" key="1">
    <source>
        <dbReference type="UniProtKB" id="P44514"/>
    </source>
</evidence>
<evidence type="ECO:0000269" key="2">
    <source>
    </source>
</evidence>
<evidence type="ECO:0000303" key="3">
    <source>
    </source>
</evidence>
<evidence type="ECO:0000305" key="4"/>
<evidence type="ECO:0000305" key="5">
    <source>
    </source>
</evidence>